<evidence type="ECO:0000250" key="1">
    <source>
        <dbReference type="UniProtKB" id="P01210"/>
    </source>
</evidence>
<evidence type="ECO:0000256" key="2">
    <source>
        <dbReference type="SAM" id="MobiDB-lite"/>
    </source>
</evidence>
<evidence type="ECO:0000305" key="3"/>
<protein>
    <recommendedName>
        <fullName>Proenkephalin-A-B</fullName>
    </recommendedName>
    <component>
        <recommendedName>
            <fullName>Synenkephalin</fullName>
        </recommendedName>
    </component>
    <component>
        <recommendedName>
            <fullName>Met-enkephalin</fullName>
        </recommendedName>
        <alternativeName>
            <fullName>Opioid growth factor</fullName>
            <shortName>OGF</shortName>
        </alternativeName>
    </component>
    <component>
        <recommendedName>
            <fullName>Met-enkephalin-Arg-Gly-Tyr</fullName>
        </recommendedName>
    </component>
    <component>
        <recommendedName>
            <fullName>Met-enkephalin-Arg-Phe</fullName>
        </recommendedName>
    </component>
</protein>
<feature type="peptide" id="PRO_0000008307" description="Synenkephalin">
    <location>
        <begin position="1" status="less than"/>
        <end position="47"/>
    </location>
</feature>
<feature type="peptide" id="PRO_0000008308" description="Met-enkephalin">
    <location>
        <begin position="50"/>
        <end position="54"/>
    </location>
</feature>
<feature type="peptide" id="PRO_0000008309" description="Met-enkephalin">
    <location>
        <begin position="57"/>
        <end position="61"/>
    </location>
</feature>
<feature type="propeptide" id="PRO_0000008310">
    <location>
        <begin position="64"/>
        <end position="85"/>
    </location>
</feature>
<feature type="peptide" id="PRO_0000008311" description="Met-enkephalin">
    <location>
        <begin position="86"/>
        <end position="90"/>
    </location>
</feature>
<feature type="propeptide" id="PRO_0000008312">
    <location>
        <begin position="93"/>
        <end position="131"/>
    </location>
</feature>
<feature type="peptide" id="PRO_0000008313" description="Met-enkephalin-Arg-Gly-Tyr">
    <location>
        <begin position="134"/>
        <end position="141"/>
    </location>
</feature>
<feature type="propeptide" id="PRO_0000008314">
    <location>
        <begin position="144"/>
        <end position="155"/>
    </location>
</feature>
<feature type="peptide" id="PRO_0000008315" description="Met-enkephalin">
    <location>
        <begin position="158"/>
        <end position="162"/>
    </location>
</feature>
<feature type="propeptide" id="PRO_0000008316">
    <location>
        <begin position="165"/>
        <end position="175"/>
    </location>
</feature>
<feature type="peptide" id="PRO_0000008317" description="Met-enkephalin">
    <location>
        <begin position="178"/>
        <end position="182"/>
    </location>
</feature>
<feature type="propeptide" id="PRO_0000008318">
    <location>
        <begin position="183"/>
        <end position="207"/>
    </location>
</feature>
<feature type="peptide" id="PRO_0000008319" description="Met-enkephalin-Arg-Phe">
    <location>
        <begin position="210"/>
        <end position="216"/>
    </location>
</feature>
<feature type="region of interest" description="Disordered" evidence="2">
    <location>
        <begin position="114"/>
        <end position="133"/>
    </location>
</feature>
<feature type="non-terminal residue">
    <location>
        <position position="1"/>
    </location>
</feature>
<name>PENKB_XENLA</name>
<dbReference type="EMBL" id="X00853">
    <property type="protein sequence ID" value="CAA25406.1"/>
    <property type="molecule type" value="Genomic_DNA"/>
</dbReference>
<dbReference type="AGR" id="Xenbase:XB-GENE-942765"/>
<dbReference type="Xenbase" id="XB-GENE-942765">
    <property type="gene designation" value="penk.L"/>
</dbReference>
<dbReference type="Proteomes" id="UP000186698">
    <property type="component" value="Unplaced"/>
</dbReference>
<dbReference type="GO" id="GO:0043679">
    <property type="term" value="C:axon terminus"/>
    <property type="evidence" value="ECO:0000318"/>
    <property type="project" value="GO_Central"/>
</dbReference>
<dbReference type="GO" id="GO:0030425">
    <property type="term" value="C:dendrite"/>
    <property type="evidence" value="ECO:0000318"/>
    <property type="project" value="GO_Central"/>
</dbReference>
<dbReference type="GO" id="GO:0005576">
    <property type="term" value="C:extracellular region"/>
    <property type="evidence" value="ECO:0007669"/>
    <property type="project" value="UniProtKB-SubCell"/>
</dbReference>
<dbReference type="GO" id="GO:0043025">
    <property type="term" value="C:neuronal cell body"/>
    <property type="evidence" value="ECO:0000318"/>
    <property type="project" value="GO_Central"/>
</dbReference>
<dbReference type="GO" id="GO:0005886">
    <property type="term" value="C:plasma membrane"/>
    <property type="evidence" value="ECO:0000318"/>
    <property type="project" value="GO_Central"/>
</dbReference>
<dbReference type="GO" id="GO:0001515">
    <property type="term" value="F:opioid peptide activity"/>
    <property type="evidence" value="ECO:0007669"/>
    <property type="project" value="UniProtKB-KW"/>
</dbReference>
<dbReference type="GO" id="GO:0031628">
    <property type="term" value="F:opioid receptor binding"/>
    <property type="evidence" value="ECO:0007669"/>
    <property type="project" value="TreeGrafter"/>
</dbReference>
<dbReference type="GO" id="GO:0007268">
    <property type="term" value="P:chemical synaptic transmission"/>
    <property type="evidence" value="ECO:0000318"/>
    <property type="project" value="GO_Central"/>
</dbReference>
<dbReference type="GO" id="GO:0007218">
    <property type="term" value="P:neuropeptide signaling pathway"/>
    <property type="evidence" value="ECO:0000318"/>
    <property type="project" value="GO_Central"/>
</dbReference>
<dbReference type="GO" id="GO:0007600">
    <property type="term" value="P:sensory perception"/>
    <property type="evidence" value="ECO:0000318"/>
    <property type="project" value="GO_Central"/>
</dbReference>
<dbReference type="InterPro" id="IPR006024">
    <property type="entry name" value="Opioid_neupept"/>
</dbReference>
<dbReference type="InterPro" id="IPR000703">
    <property type="entry name" value="Proenkphlin_A"/>
</dbReference>
<dbReference type="PANTHER" id="PTHR11438">
    <property type="entry name" value="PROENKEPHALIN"/>
    <property type="match status" value="1"/>
</dbReference>
<dbReference type="PANTHER" id="PTHR11438:SF3">
    <property type="entry name" value="PROENKEPHALIN-A"/>
    <property type="match status" value="1"/>
</dbReference>
<dbReference type="Pfam" id="PF01160">
    <property type="entry name" value="Opiods_neuropep"/>
    <property type="match status" value="1"/>
</dbReference>
<dbReference type="PRINTS" id="PR01028">
    <property type="entry name" value="OPIOIDPRCRSR"/>
</dbReference>
<dbReference type="PRINTS" id="PR01029">
    <property type="entry name" value="PENKAPRCRSR"/>
</dbReference>
<reference key="1">
    <citation type="journal article" date="1984" name="Nature">
        <title>Polymorphism and absence of Leu-enkephalin sequences in proenkephalin genes in Xenopus laevis.</title>
        <authorList>
            <person name="Martens G.J.M."/>
            <person name="Herbert E."/>
        </authorList>
    </citation>
    <scope>NUCLEOTIDE SEQUENCE [GENOMIC DNA]</scope>
</reference>
<gene>
    <name type="primary">penk-b</name>
</gene>
<proteinExistence type="inferred from homology"/>
<organism>
    <name type="scientific">Xenopus laevis</name>
    <name type="common">African clawed frog</name>
    <dbReference type="NCBI Taxonomy" id="8355"/>
    <lineage>
        <taxon>Eukaryota</taxon>
        <taxon>Metazoa</taxon>
        <taxon>Chordata</taxon>
        <taxon>Craniata</taxon>
        <taxon>Vertebrata</taxon>
        <taxon>Euteleostomi</taxon>
        <taxon>Amphibia</taxon>
        <taxon>Batrachia</taxon>
        <taxon>Anura</taxon>
        <taxon>Pipoidea</taxon>
        <taxon>Pipidae</taxon>
        <taxon>Xenopodinae</taxon>
        <taxon>Xenopus</taxon>
        <taxon>Xenopus</taxon>
    </lineage>
</organism>
<sequence length="216" mass="24979">ACTLECEGKLPSAKAWGTCKELLQLTKLDGVQDGEKYQDNNDSHYIAKKYGGFMKRYGGFMKKMDELYHAEPEEDDAGGEILAKNYGGFMKKEYDSNRDASDLLRELLATSGDPESAIYHDNNSETPGEMNKRYGGFMRGYRRSTDLEDETRGIQKRYGGFMRRVGRPEWWQDYQKRYGGFMTRFTDSFLPSDEDGESYSKENPDMEKRYGGFMRF</sequence>
<keyword id="KW-0165">Cleavage on pair of basic residues</keyword>
<keyword id="KW-1015">Disulfide bond</keyword>
<keyword id="KW-0257">Endorphin</keyword>
<keyword id="KW-0527">Neuropeptide</keyword>
<keyword id="KW-0555">Opioid peptide</keyword>
<keyword id="KW-1185">Reference proteome</keyword>
<keyword id="KW-0964">Secreted</keyword>
<accession>P07194</accession>
<comment type="function">
    <text evidence="1">Enkephalin neuropeptides compete with and mimic the effects of opiate drugs. They play a role in a number of physiologic functions, including pain perception and responses to stress.</text>
</comment>
<comment type="subcellular location">
    <subcellularLocation>
        <location evidence="1">Secreted</location>
    </subcellularLocation>
</comment>
<comment type="PTM">
    <text evidence="1">The N-terminal domain contains 6 conserved cysteines thought to be involved in disulfide bonding and/or processing.</text>
</comment>
<comment type="similarity">
    <text evidence="3">Belongs to the opioid neuropeptide precursor family.</text>
</comment>